<name>VMF7_MYXVU</name>
<reference key="1">
    <citation type="journal article" date="1992" name="J. Gen. Virol.">
        <title>The myxoma virus thymidine kinase gene: sequence and transcriptional mapping.</title>
        <authorList>
            <person name="Jackson R.J."/>
            <person name="Bults H.G."/>
        </authorList>
    </citation>
    <scope>NUCLEOTIDE SEQUENCE [GENOMIC DNA]</scope>
</reference>
<sequence length="148" mass="17109">MDHGKYLLTIFLNDDDSFFKYLAAQEDDVAMSDVHTIVDYLNFLLALLIKSKDKLEAVGYYYAPLSEEYKAVFDFTDTKSLKQLFNKQPVYVESDSPICVDKGYLADFVLATTRLKKQLPLVLDKEVTYVDPYKDKRFANILSILHKN</sequence>
<organismHost>
    <name type="scientific">Oryctolagus cuniculus</name>
    <name type="common">Rabbit</name>
    <dbReference type="NCBI Taxonomy" id="9986"/>
</organismHost>
<accession>P68562</accession>
<accession>P28849</accession>
<gene>
    <name type="ORF">MVF7</name>
</gene>
<protein>
    <recommendedName>
        <fullName>MF7 protein</fullName>
    </recommendedName>
</protein>
<organism>
    <name type="scientific">Myxoma virus (strain Uriarra)</name>
    <name type="common">MYXV</name>
    <dbReference type="NCBI Taxonomy" id="265876"/>
    <lineage>
        <taxon>Viruses</taxon>
        <taxon>Varidnaviria</taxon>
        <taxon>Bamfordvirae</taxon>
        <taxon>Nucleocytoviricota</taxon>
        <taxon>Pokkesviricetes</taxon>
        <taxon>Chitovirales</taxon>
        <taxon>Poxviridae</taxon>
        <taxon>Chordopoxvirinae</taxon>
        <taxon>Leporipoxvirus</taxon>
        <taxon>Myxoma virus</taxon>
    </lineage>
</organism>
<dbReference type="EMBL" id="X52655">
    <property type="protein sequence ID" value="CAA36879.1"/>
    <property type="molecule type" value="Genomic_DNA"/>
</dbReference>
<dbReference type="PIR" id="JQ1422">
    <property type="entry name" value="QQVZM2"/>
</dbReference>
<dbReference type="KEGG" id="vg:932188"/>
<dbReference type="InterPro" id="IPR005006">
    <property type="entry name" value="Poxvirus_J1"/>
</dbReference>
<dbReference type="Pfam" id="PF03338">
    <property type="entry name" value="Pox_J1"/>
    <property type="match status" value="1"/>
</dbReference>
<feature type="chain" id="PRO_0000099749" description="MF7 protein">
    <location>
        <begin position="1"/>
        <end position="148"/>
    </location>
</feature>
<proteinExistence type="predicted"/>